<reference key="1">
    <citation type="submission" date="2006-09" db="EMBL/GenBank/DDBJ databases">
        <title>NISC comparative sequencing initiative.</title>
        <authorList>
            <person name="Antonellis A."/>
            <person name="Ayele K."/>
            <person name="Benjamin B."/>
            <person name="Blakesley R.W."/>
            <person name="Boakye A."/>
            <person name="Bouffard G.G."/>
            <person name="Brinkley C."/>
            <person name="Brooks S."/>
            <person name="Chu G."/>
            <person name="Coleman H."/>
            <person name="Engle J."/>
            <person name="Gestole M."/>
            <person name="Greene A."/>
            <person name="Guan X."/>
            <person name="Gupta J."/>
            <person name="Haghighi P."/>
            <person name="Han J."/>
            <person name="Hansen N."/>
            <person name="Ho S.-L."/>
            <person name="Hu P."/>
            <person name="Hunter G."/>
            <person name="Hurle B."/>
            <person name="Idol J.R."/>
            <person name="Kwong P."/>
            <person name="Laric P."/>
            <person name="Larson S."/>
            <person name="Lee-Lin S.-Q."/>
            <person name="Legaspi R."/>
            <person name="Madden M."/>
            <person name="Maduro Q.L."/>
            <person name="Maduro V.B."/>
            <person name="Margulies E.H."/>
            <person name="Masiello C."/>
            <person name="Maskeri B."/>
            <person name="McDowell J."/>
            <person name="Mojidi H.A."/>
            <person name="Mullikin J.C."/>
            <person name="Oestreicher J.S."/>
            <person name="Park M."/>
            <person name="Portnoy M.E."/>
            <person name="Prasad A."/>
            <person name="Puri O."/>
            <person name="Reddix-Dugue N."/>
            <person name="Schandler K."/>
            <person name="Schueler M.G."/>
            <person name="Sison C."/>
            <person name="Stantripop S."/>
            <person name="Stephen E."/>
            <person name="Taye A."/>
            <person name="Thomas J.W."/>
            <person name="Thomas P.J."/>
            <person name="Tsipouri V."/>
            <person name="Ung L."/>
            <person name="Vogt J.L."/>
            <person name="Wetherby K.D."/>
            <person name="Young A."/>
            <person name="Green E.D."/>
        </authorList>
    </citation>
    <scope>NUCLEOTIDE SEQUENCE [LARGE SCALE GENOMIC DNA]</scope>
</reference>
<dbReference type="EMBL" id="DP000181">
    <property type="protein sequence ID" value="ABI93633.1"/>
    <property type="molecule type" value="Genomic_DNA"/>
</dbReference>
<dbReference type="RefSeq" id="XP_004455400.2">
    <property type="nucleotide sequence ID" value="XM_004455343.5"/>
</dbReference>
<dbReference type="SMR" id="Q07E43"/>
<dbReference type="GeneID" id="101432962"/>
<dbReference type="OrthoDB" id="439236at2759"/>
<dbReference type="GO" id="GO:0071546">
    <property type="term" value="C:pi-body"/>
    <property type="evidence" value="ECO:0000250"/>
    <property type="project" value="UniProtKB"/>
</dbReference>
<dbReference type="GO" id="GO:0030154">
    <property type="term" value="P:cell differentiation"/>
    <property type="evidence" value="ECO:0007669"/>
    <property type="project" value="UniProtKB-KW"/>
</dbReference>
<dbReference type="GO" id="GO:0007140">
    <property type="term" value="P:male meiotic nuclear division"/>
    <property type="evidence" value="ECO:0000250"/>
    <property type="project" value="UniProtKB"/>
</dbReference>
<dbReference type="GO" id="GO:0031047">
    <property type="term" value="P:regulatory ncRNA-mediated gene silencing"/>
    <property type="evidence" value="ECO:0007669"/>
    <property type="project" value="UniProtKB-KW"/>
</dbReference>
<dbReference type="GO" id="GO:0007283">
    <property type="term" value="P:spermatogenesis"/>
    <property type="evidence" value="ECO:0000250"/>
    <property type="project" value="UniProtKB"/>
</dbReference>
<dbReference type="GO" id="GO:0010526">
    <property type="term" value="P:transposable element silencing"/>
    <property type="evidence" value="ECO:0000250"/>
    <property type="project" value="UniProtKB"/>
</dbReference>
<dbReference type="CDD" id="cd09521">
    <property type="entry name" value="SAM_ASZ1"/>
    <property type="match status" value="1"/>
</dbReference>
<dbReference type="FunFam" id="1.25.40.20:FF:000192">
    <property type="entry name" value="Ankyrin repeat, SAM and basic leucine zipper domain-containing 1"/>
    <property type="match status" value="1"/>
</dbReference>
<dbReference type="FunFam" id="1.10.150.50:FF:000060">
    <property type="entry name" value="Ankyrin repeat, SAM and basic leucine zipper domain-containing protein 1"/>
    <property type="match status" value="1"/>
</dbReference>
<dbReference type="Gene3D" id="1.25.40.20">
    <property type="entry name" value="Ankyrin repeat-containing domain"/>
    <property type="match status" value="2"/>
</dbReference>
<dbReference type="Gene3D" id="1.10.150.50">
    <property type="entry name" value="Transcription Factor, Ets-1"/>
    <property type="match status" value="1"/>
</dbReference>
<dbReference type="InterPro" id="IPR002110">
    <property type="entry name" value="Ankyrin_rpt"/>
</dbReference>
<dbReference type="InterPro" id="IPR036770">
    <property type="entry name" value="Ankyrin_rpt-contain_sf"/>
</dbReference>
<dbReference type="InterPro" id="IPR042650">
    <property type="entry name" value="Asz1_SAM"/>
</dbReference>
<dbReference type="InterPro" id="IPR001660">
    <property type="entry name" value="SAM"/>
</dbReference>
<dbReference type="InterPro" id="IPR013761">
    <property type="entry name" value="SAM/pointed_sf"/>
</dbReference>
<dbReference type="PANTHER" id="PTHR24157">
    <property type="entry name" value="ANKYRIN REPEAT, SAM AND BASIC LEUCINE ZIPPER DOMAIN-CONTAINING PROTEIN 1"/>
    <property type="match status" value="1"/>
</dbReference>
<dbReference type="PANTHER" id="PTHR24157:SF3">
    <property type="entry name" value="ANKYRIN REPEAT, SAM AND BASIC LEUCINE ZIPPER DOMAIN-CONTAINING PROTEIN 1"/>
    <property type="match status" value="1"/>
</dbReference>
<dbReference type="Pfam" id="PF12796">
    <property type="entry name" value="Ank_2"/>
    <property type="match status" value="1"/>
</dbReference>
<dbReference type="Pfam" id="PF13637">
    <property type="entry name" value="Ank_4"/>
    <property type="match status" value="1"/>
</dbReference>
<dbReference type="Pfam" id="PF07647">
    <property type="entry name" value="SAM_2"/>
    <property type="match status" value="1"/>
</dbReference>
<dbReference type="PRINTS" id="PR01415">
    <property type="entry name" value="ANKYRIN"/>
</dbReference>
<dbReference type="SMART" id="SM00248">
    <property type="entry name" value="ANK"/>
    <property type="match status" value="5"/>
</dbReference>
<dbReference type="SUPFAM" id="SSF48403">
    <property type="entry name" value="Ankyrin repeat"/>
    <property type="match status" value="1"/>
</dbReference>
<dbReference type="SUPFAM" id="SSF140860">
    <property type="entry name" value="Pseudo ankyrin repeat-like"/>
    <property type="match status" value="1"/>
</dbReference>
<dbReference type="SUPFAM" id="SSF47769">
    <property type="entry name" value="SAM/Pointed domain"/>
    <property type="match status" value="1"/>
</dbReference>
<dbReference type="PROSITE" id="PS50297">
    <property type="entry name" value="ANK_REP_REGION"/>
    <property type="match status" value="1"/>
</dbReference>
<dbReference type="PROSITE" id="PS50088">
    <property type="entry name" value="ANK_REPEAT"/>
    <property type="match status" value="3"/>
</dbReference>
<sequence length="476" mass="53158">MAAAVGLRGLAVAGGGESTDSEDDGWEIGYLDRASQKLTGLLPTEEKNETFKKALTTGDISLVEELLDSGISIDSSFRYGWTPLMYAASVANVELVRVLLDRGANASFDKDKQTILITACSARGSEEQILKCVELLLSRNADPNVACRRLMTPVMYAARAGHPQVVAVLVAYGAEVNTQDENGYTALTWAARQGHKNVILKLLELGADKMLQTKDGKTPSEIAKRNKHLEIFNFLSLSLNPLEGKLQQLTKEETICKLLTTVSDKEKDHIFSSYAAFEDLEIFLHGLGLEHMTDLLKERDITLRHLLTMRKDEFTKNGITSRDQQKILAALKELEVEEIKFGELPEVAKLEISGDEFLNFLLKLNKQCGHLITAVQNIITELPVNSHKIVLEWASPQNFTSVCEELVSNVEDLSEEVCKLKDLIQKLQNERENDPTHIPSMDEVSSWNNRILKRTAFTVCGFGFLLFICKLTFQRK</sequence>
<comment type="function">
    <text evidence="1">Plays a central role during spermatogenesis by repressing transposable elements and preventing their mobilization, which is essential for the germline integrity. Acts via the piRNA metabolic process, which mediates the repression of transposable elements during meiosis by forming complexes composed of piRNAs and Piwi proteins and governs the methylation and subsequent repression of transposons. Its association with pi-bodies suggests a participation in the primary piRNAs metabolic process. Required prior to the pachytene stage to facilitate the production of multiple types of piRNAs, including those associated with repeats involved in the regulation of retrotransposons. May act by mediating protein-protein interactions during germ cell maturation (By similarity).</text>
</comment>
<comment type="subunit">
    <text evidence="1">Interacts with DDX4, PIWIL1, RANBP9 and TDRD1.</text>
</comment>
<comment type="subcellular location">
    <subcellularLocation>
        <location evidence="1">Cytoplasm</location>
    </subcellularLocation>
    <text evidence="1">Component of the meiotic nuage, also named P granule, a germ-cell-specific organelle required to repress transposon activity during meiosis. Specifically localizes to pi-bodies, a subset of the nuage which contains primary piRNAs (By similarity).</text>
</comment>
<accession>Q07E43</accession>
<organism>
    <name type="scientific">Dasypus novemcinctus</name>
    <name type="common">Nine-banded armadillo</name>
    <dbReference type="NCBI Taxonomy" id="9361"/>
    <lineage>
        <taxon>Eukaryota</taxon>
        <taxon>Metazoa</taxon>
        <taxon>Chordata</taxon>
        <taxon>Craniata</taxon>
        <taxon>Vertebrata</taxon>
        <taxon>Euteleostomi</taxon>
        <taxon>Mammalia</taxon>
        <taxon>Eutheria</taxon>
        <taxon>Xenarthra</taxon>
        <taxon>Cingulata</taxon>
        <taxon>Dasypodidae</taxon>
        <taxon>Dasypus</taxon>
    </lineage>
</organism>
<name>ASZ1_DASNO</name>
<gene>
    <name type="primary">ASZ1</name>
    <name type="synonym">GASZ</name>
</gene>
<protein>
    <recommendedName>
        <fullName>Ankyrin repeat, SAM and basic leucine zipper domain-containing protein 1</fullName>
    </recommendedName>
    <alternativeName>
        <fullName>Germ cell-specific ankyrin, SAM and basic leucine zipper domain-containing protein</fullName>
    </alternativeName>
</protein>
<feature type="chain" id="PRO_0000260389" description="Ankyrin repeat, SAM and basic leucine zipper domain-containing protein 1">
    <location>
        <begin position="1"/>
        <end position="476"/>
    </location>
</feature>
<feature type="repeat" description="ANK 1">
    <location>
        <begin position="46"/>
        <end position="75"/>
    </location>
</feature>
<feature type="repeat" description="ANK 2">
    <location>
        <begin position="79"/>
        <end position="108"/>
    </location>
</feature>
<feature type="repeat" description="ANK 3">
    <location>
        <begin position="111"/>
        <end position="145"/>
    </location>
</feature>
<feature type="repeat" description="ANK 4">
    <location>
        <begin position="149"/>
        <end position="178"/>
    </location>
</feature>
<feature type="repeat" description="ANK 5">
    <location>
        <begin position="182"/>
        <end position="211"/>
    </location>
</feature>
<feature type="repeat" description="ANK 6">
    <location>
        <begin position="215"/>
        <end position="244"/>
    </location>
</feature>
<feature type="domain" description="SAM">
    <location>
        <begin position="273"/>
        <end position="335"/>
    </location>
</feature>
<feature type="modified residue" description="Phosphoserine" evidence="2">
    <location>
        <position position="18"/>
    </location>
</feature>
<feature type="modified residue" description="Phosphoserine" evidence="2">
    <location>
        <position position="21"/>
    </location>
</feature>
<proteinExistence type="inferred from homology"/>
<evidence type="ECO:0000250" key="1"/>
<evidence type="ECO:0000250" key="2">
    <source>
        <dbReference type="UniProtKB" id="Q8VD46"/>
    </source>
</evidence>
<keyword id="KW-0040">ANK repeat</keyword>
<keyword id="KW-0963">Cytoplasm</keyword>
<keyword id="KW-0217">Developmental protein</keyword>
<keyword id="KW-0221">Differentiation</keyword>
<keyword id="KW-0469">Meiosis</keyword>
<keyword id="KW-0597">Phosphoprotein</keyword>
<keyword id="KW-0677">Repeat</keyword>
<keyword id="KW-0943">RNA-mediated gene silencing</keyword>
<keyword id="KW-0744">Spermatogenesis</keyword>